<accession>P0A6V4</accession>
<accession>P00584</accession>
<dbReference type="EC" id="2.7.7.27" evidence="2"/>
<dbReference type="EMBL" id="AE005674">
    <property type="protein sequence ID" value="AAN44913.2"/>
    <property type="molecule type" value="Genomic_DNA"/>
</dbReference>
<dbReference type="EMBL" id="AE014073">
    <property type="protein sequence ID" value="AAP19268.1"/>
    <property type="molecule type" value="Genomic_DNA"/>
</dbReference>
<dbReference type="RefSeq" id="NP_709206.2">
    <property type="nucleotide sequence ID" value="NC_004337.2"/>
</dbReference>
<dbReference type="RefSeq" id="WP_000253975.1">
    <property type="nucleotide sequence ID" value="NZ_WPGW01000010.1"/>
</dbReference>
<dbReference type="SMR" id="P0A6V4"/>
<dbReference type="STRING" id="198214.SF3453"/>
<dbReference type="PaxDb" id="198214-SF3453"/>
<dbReference type="GeneID" id="1026462"/>
<dbReference type="GeneID" id="93778559"/>
<dbReference type="KEGG" id="sfl:SF3453"/>
<dbReference type="KEGG" id="sfx:S4310"/>
<dbReference type="PATRIC" id="fig|198214.7.peg.4073"/>
<dbReference type="HOGENOM" id="CLU_029499_14_1_6"/>
<dbReference type="UniPathway" id="UPA00164"/>
<dbReference type="Proteomes" id="UP000001006">
    <property type="component" value="Chromosome"/>
</dbReference>
<dbReference type="Proteomes" id="UP000002673">
    <property type="component" value="Chromosome"/>
</dbReference>
<dbReference type="GO" id="GO:0005524">
    <property type="term" value="F:ATP binding"/>
    <property type="evidence" value="ECO:0007669"/>
    <property type="project" value="UniProtKB-KW"/>
</dbReference>
<dbReference type="GO" id="GO:0008878">
    <property type="term" value="F:glucose-1-phosphate adenylyltransferase activity"/>
    <property type="evidence" value="ECO:0007669"/>
    <property type="project" value="UniProtKB-UniRule"/>
</dbReference>
<dbReference type="GO" id="GO:0005978">
    <property type="term" value="P:glycogen biosynthetic process"/>
    <property type="evidence" value="ECO:0007669"/>
    <property type="project" value="UniProtKB-UniRule"/>
</dbReference>
<dbReference type="CDD" id="cd02508">
    <property type="entry name" value="ADP_Glucose_PP"/>
    <property type="match status" value="1"/>
</dbReference>
<dbReference type="CDD" id="cd04651">
    <property type="entry name" value="LbH_G1P_AT_C"/>
    <property type="match status" value="1"/>
</dbReference>
<dbReference type="FunFam" id="2.160.10.10:FF:000006">
    <property type="entry name" value="Glucose-1-phosphate adenylyltransferase"/>
    <property type="match status" value="1"/>
</dbReference>
<dbReference type="FunFam" id="3.90.550.10:FF:000014">
    <property type="entry name" value="Glucose-1-phosphate adenylyltransferase"/>
    <property type="match status" value="1"/>
</dbReference>
<dbReference type="Gene3D" id="2.160.10.10">
    <property type="entry name" value="Hexapeptide repeat proteins"/>
    <property type="match status" value="1"/>
</dbReference>
<dbReference type="Gene3D" id="3.90.550.10">
    <property type="entry name" value="Spore Coat Polysaccharide Biosynthesis Protein SpsA, Chain A"/>
    <property type="match status" value="1"/>
</dbReference>
<dbReference type="HAMAP" id="MF_00624">
    <property type="entry name" value="GlgC"/>
    <property type="match status" value="1"/>
</dbReference>
<dbReference type="InterPro" id="IPR011831">
    <property type="entry name" value="ADP-Glc_PPase"/>
</dbReference>
<dbReference type="InterPro" id="IPR005836">
    <property type="entry name" value="ADP_Glu_pyroP_CS"/>
</dbReference>
<dbReference type="InterPro" id="IPR023049">
    <property type="entry name" value="GlgC_bac"/>
</dbReference>
<dbReference type="InterPro" id="IPR056818">
    <property type="entry name" value="GlmU/GlgC-like_hexapep"/>
</dbReference>
<dbReference type="InterPro" id="IPR005835">
    <property type="entry name" value="NTP_transferase_dom"/>
</dbReference>
<dbReference type="InterPro" id="IPR029044">
    <property type="entry name" value="Nucleotide-diphossugar_trans"/>
</dbReference>
<dbReference type="InterPro" id="IPR011004">
    <property type="entry name" value="Trimer_LpxA-like_sf"/>
</dbReference>
<dbReference type="NCBIfam" id="TIGR02091">
    <property type="entry name" value="glgC"/>
    <property type="match status" value="1"/>
</dbReference>
<dbReference type="NCBIfam" id="NF001947">
    <property type="entry name" value="PRK00725.1"/>
    <property type="match status" value="1"/>
</dbReference>
<dbReference type="NCBIfam" id="NF002023">
    <property type="entry name" value="PRK00844.1"/>
    <property type="match status" value="1"/>
</dbReference>
<dbReference type="PANTHER" id="PTHR43523:SF2">
    <property type="entry name" value="GLUCOSE-1-PHOSPHATE ADENYLYLTRANSFERASE"/>
    <property type="match status" value="1"/>
</dbReference>
<dbReference type="PANTHER" id="PTHR43523">
    <property type="entry name" value="GLUCOSE-1-PHOSPHATE ADENYLYLTRANSFERASE-RELATED"/>
    <property type="match status" value="1"/>
</dbReference>
<dbReference type="Pfam" id="PF24894">
    <property type="entry name" value="Hexapep_GlmU"/>
    <property type="match status" value="1"/>
</dbReference>
<dbReference type="Pfam" id="PF00483">
    <property type="entry name" value="NTP_transferase"/>
    <property type="match status" value="1"/>
</dbReference>
<dbReference type="SUPFAM" id="SSF53448">
    <property type="entry name" value="Nucleotide-diphospho-sugar transferases"/>
    <property type="match status" value="1"/>
</dbReference>
<dbReference type="SUPFAM" id="SSF51161">
    <property type="entry name" value="Trimeric LpxA-like enzymes"/>
    <property type="match status" value="1"/>
</dbReference>
<dbReference type="PROSITE" id="PS00808">
    <property type="entry name" value="ADP_GLC_PYROPHOSPH_1"/>
    <property type="match status" value="1"/>
</dbReference>
<dbReference type="PROSITE" id="PS00809">
    <property type="entry name" value="ADP_GLC_PYROPHOSPH_2"/>
    <property type="match status" value="1"/>
</dbReference>
<dbReference type="PROSITE" id="PS00810">
    <property type="entry name" value="ADP_GLC_PYROPHOSPH_3"/>
    <property type="match status" value="1"/>
</dbReference>
<comment type="function">
    <text evidence="2">Involved in the biosynthesis of ADP-glucose, a building block required for the elongation reactions to produce glycogen. Catalyzes the reaction between ATP and alpha-D-glucose 1-phosphate (G1P) to produce pyrophosphate and ADP-Glc.</text>
</comment>
<comment type="catalytic activity">
    <reaction evidence="2">
        <text>alpha-D-glucose 1-phosphate + ATP + H(+) = ADP-alpha-D-glucose + diphosphate</text>
        <dbReference type="Rhea" id="RHEA:12120"/>
        <dbReference type="ChEBI" id="CHEBI:15378"/>
        <dbReference type="ChEBI" id="CHEBI:30616"/>
        <dbReference type="ChEBI" id="CHEBI:33019"/>
        <dbReference type="ChEBI" id="CHEBI:57498"/>
        <dbReference type="ChEBI" id="CHEBI:58601"/>
        <dbReference type="EC" id="2.7.7.27"/>
    </reaction>
</comment>
<comment type="activity regulation">
    <text evidence="2">Allosterically activated by fructose-1,6-bisphosphate (F16BP) and inhibited by AMP.</text>
</comment>
<comment type="pathway">
    <text evidence="2">Glycan biosynthesis; glycogen biosynthesis.</text>
</comment>
<comment type="subunit">
    <text evidence="2">Homotetramer.</text>
</comment>
<comment type="similarity">
    <text evidence="2">Belongs to the bacterial/plant glucose-1-phosphate adenylyltransferase family.</text>
</comment>
<organism>
    <name type="scientific">Shigella flexneri</name>
    <dbReference type="NCBI Taxonomy" id="623"/>
    <lineage>
        <taxon>Bacteria</taxon>
        <taxon>Pseudomonadati</taxon>
        <taxon>Pseudomonadota</taxon>
        <taxon>Gammaproteobacteria</taxon>
        <taxon>Enterobacterales</taxon>
        <taxon>Enterobacteriaceae</taxon>
        <taxon>Shigella</taxon>
    </lineage>
</organism>
<evidence type="ECO:0000250" key="1"/>
<evidence type="ECO:0000255" key="2">
    <source>
        <dbReference type="HAMAP-Rule" id="MF_00624"/>
    </source>
</evidence>
<protein>
    <recommendedName>
        <fullName evidence="2">Glucose-1-phosphate adenylyltransferase</fullName>
        <ecNumber evidence="2">2.7.7.27</ecNumber>
    </recommendedName>
    <alternativeName>
        <fullName evidence="2">ADP-glucose pyrophosphorylase</fullName>
        <shortName evidence="2">ADPGlc PPase</shortName>
    </alternativeName>
    <alternativeName>
        <fullName evidence="2">ADP-glucose synthase</fullName>
    </alternativeName>
</protein>
<gene>
    <name evidence="2" type="primary">glgC</name>
    <name type="ordered locus">SF3453</name>
    <name type="ordered locus">S4310</name>
</gene>
<keyword id="KW-0021">Allosteric enzyme</keyword>
<keyword id="KW-0067">ATP-binding</keyword>
<keyword id="KW-0119">Carbohydrate metabolism</keyword>
<keyword id="KW-0320">Glycogen biosynthesis</keyword>
<keyword id="KW-0321">Glycogen metabolism</keyword>
<keyword id="KW-0547">Nucleotide-binding</keyword>
<keyword id="KW-0548">Nucleotidyltransferase</keyword>
<keyword id="KW-1185">Reference proteome</keyword>
<keyword id="KW-0808">Transferase</keyword>
<reference key="1">
    <citation type="journal article" date="2002" name="Nucleic Acids Res.">
        <title>Genome sequence of Shigella flexneri 2a: insights into pathogenicity through comparison with genomes of Escherichia coli K12 and O157.</title>
        <authorList>
            <person name="Jin Q."/>
            <person name="Yuan Z."/>
            <person name="Xu J."/>
            <person name="Wang Y."/>
            <person name="Shen Y."/>
            <person name="Lu W."/>
            <person name="Wang J."/>
            <person name="Liu H."/>
            <person name="Yang J."/>
            <person name="Yang F."/>
            <person name="Zhang X."/>
            <person name="Zhang J."/>
            <person name="Yang G."/>
            <person name="Wu H."/>
            <person name="Qu D."/>
            <person name="Dong J."/>
            <person name="Sun L."/>
            <person name="Xue Y."/>
            <person name="Zhao A."/>
            <person name="Gao Y."/>
            <person name="Zhu J."/>
            <person name="Kan B."/>
            <person name="Ding K."/>
            <person name="Chen S."/>
            <person name="Cheng H."/>
            <person name="Yao Z."/>
            <person name="He B."/>
            <person name="Chen R."/>
            <person name="Ma D."/>
            <person name="Qiang B."/>
            <person name="Wen Y."/>
            <person name="Hou Y."/>
            <person name="Yu J."/>
        </authorList>
    </citation>
    <scope>NUCLEOTIDE SEQUENCE [LARGE SCALE GENOMIC DNA]</scope>
    <source>
        <strain>301 / Serotype 2a</strain>
    </source>
</reference>
<reference key="2">
    <citation type="journal article" date="2003" name="Infect. Immun.">
        <title>Complete genome sequence and comparative genomics of Shigella flexneri serotype 2a strain 2457T.</title>
        <authorList>
            <person name="Wei J."/>
            <person name="Goldberg M.B."/>
            <person name="Burland V."/>
            <person name="Venkatesan M.M."/>
            <person name="Deng W."/>
            <person name="Fournier G."/>
            <person name="Mayhew G.F."/>
            <person name="Plunkett G. III"/>
            <person name="Rose D.J."/>
            <person name="Darling A."/>
            <person name="Mau B."/>
            <person name="Perna N.T."/>
            <person name="Payne S.M."/>
            <person name="Runyen-Janecky L.J."/>
            <person name="Zhou S."/>
            <person name="Schwartz D.C."/>
            <person name="Blattner F.R."/>
        </authorList>
    </citation>
    <scope>NUCLEOTIDE SEQUENCE [LARGE SCALE GENOMIC DNA]</scope>
    <source>
        <strain>ATCC 700930 / 2457T / Serotype 2a</strain>
    </source>
</reference>
<sequence>MVSLEKNDHLMLARQLPLKSVALILAGGRGTRLKDLTNKRAKPAVHFGGKFRIIDFALSNCINSGIRRMGVITQYQSHTLVQHIQRGWSFFNEEMNEFVDLLPAQQRMKGENWYRGTADAVTQNLDIIRRYKAEYVVILAGDHIYKQDYSRMLIDHVEKGARCTVACMPVPIEEASAFGVMAVDENDKIIEFVEKPANPPSMPNDPSKSLASMGIYVFDADYLYELLEEDDRDENSSHDFGKDLIPKITEAGLAYAHPFPLSCVQSDPDAEPYWRDVGTLEAYWKANLDLASVVPELDMYDRNWPIRTYNESLPPAKFVQDRSGSHGMTLNSLVSGGCVISGSVVVQSVLFSRVRVNSFCNIDSAVLLPEVWVGRSCRLRRCVIDRACVIPEGMVIGENAEEDARRFYRSEEGIVLVTREMLRKLGHKQER</sequence>
<feature type="initiator methionine" description="Removed" evidence="1">
    <location>
        <position position="1"/>
    </location>
</feature>
<feature type="chain" id="PRO_0000195329" description="Glucose-1-phosphate adenylyltransferase">
    <location>
        <begin position="2"/>
        <end position="431"/>
    </location>
</feature>
<feature type="binding site" evidence="2">
    <location>
        <position position="39"/>
    </location>
    <ligand>
        <name>beta-D-fructose 1,6-bisphosphate</name>
        <dbReference type="ChEBI" id="CHEBI:32966"/>
    </ligand>
</feature>
<feature type="binding site" evidence="2">
    <location>
        <position position="40"/>
    </location>
    <ligand>
        <name>AMP</name>
        <dbReference type="ChEBI" id="CHEBI:456215"/>
    </ligand>
</feature>
<feature type="binding site" evidence="2">
    <location>
        <position position="46"/>
    </location>
    <ligand>
        <name>AMP</name>
        <dbReference type="ChEBI" id="CHEBI:456215"/>
    </ligand>
</feature>
<feature type="binding site" evidence="2">
    <location>
        <position position="52"/>
    </location>
    <ligand>
        <name>AMP</name>
        <dbReference type="ChEBI" id="CHEBI:456215"/>
    </ligand>
</feature>
<feature type="binding site" evidence="2">
    <location>
        <position position="114"/>
    </location>
    <ligand>
        <name>alpha-D-glucose 1-phosphate</name>
        <dbReference type="ChEBI" id="CHEBI:58601"/>
    </ligand>
</feature>
<feature type="binding site" evidence="2">
    <location>
        <position position="130"/>
    </location>
    <ligand>
        <name>AMP</name>
        <dbReference type="ChEBI" id="CHEBI:456215"/>
    </ligand>
</feature>
<feature type="binding site" evidence="2">
    <location>
        <position position="179"/>
    </location>
    <ligand>
        <name>alpha-D-glucose 1-phosphate</name>
        <dbReference type="ChEBI" id="CHEBI:58601"/>
    </ligand>
</feature>
<feature type="binding site" evidence="2">
    <location>
        <begin position="194"/>
        <end position="195"/>
    </location>
    <ligand>
        <name>alpha-D-glucose 1-phosphate</name>
        <dbReference type="ChEBI" id="CHEBI:58601"/>
    </ligand>
</feature>
<feature type="binding site" evidence="2">
    <location>
        <position position="212"/>
    </location>
    <ligand>
        <name>alpha-D-glucose 1-phosphate</name>
        <dbReference type="ChEBI" id="CHEBI:58601"/>
    </ligand>
</feature>
<feature type="binding site" evidence="2">
    <location>
        <position position="370"/>
    </location>
    <ligand>
        <name>AMP</name>
        <dbReference type="ChEBI" id="CHEBI:456215"/>
    </ligand>
</feature>
<feature type="binding site" evidence="2">
    <location>
        <position position="386"/>
    </location>
    <ligand>
        <name>AMP</name>
        <dbReference type="ChEBI" id="CHEBI:456215"/>
    </ligand>
</feature>
<feature type="binding site" evidence="2">
    <location>
        <begin position="419"/>
        <end position="423"/>
    </location>
    <ligand>
        <name>beta-D-fructose 1,6-bisphosphate</name>
        <dbReference type="ChEBI" id="CHEBI:32966"/>
    </ligand>
</feature>
<feature type="binding site" evidence="2">
    <location>
        <begin position="429"/>
        <end position="431"/>
    </location>
    <ligand>
        <name>beta-D-fructose 1,6-bisphosphate</name>
        <dbReference type="ChEBI" id="CHEBI:32966"/>
    </ligand>
</feature>
<feature type="site" description="Could play a key role in the communication between the regulatory and the substrate sites" evidence="2">
    <location>
        <position position="74"/>
    </location>
</feature>
<feature type="site" description="Could play a key role in the communication between the regulatory and the substrate sites" evidence="2">
    <location>
        <position position="113"/>
    </location>
</feature>
<proteinExistence type="inferred from homology"/>
<name>GLGC_SHIFL</name>